<sequence length="297" mass="33870">MENFQKVEKIGEGTYGVVYKARNRETGEIVALKKIRLDTETEGVPSTAIREISLLKELNHPNIVKLLDVIHTENKLYLVFEFLNQDLKKFMDGSNISGISLALVKSYLFQLLQGLAFCHSHRVLHRDLKPQNLLINSDGAIKLADFGLARAFGVPVRTFTHEVVTLWYRAPEILLGCKFYSTAVDIWSLGCIFAEMITRRALFPGDSEIDQLFRIFRTLGTPDEVSWPGVTTMPDYKSTFPKWIRQDFSKVVPPLDEDGRDLLAQMLQYDSNKRISAKVALTHPFFRDVSRPTPHLI</sequence>
<accession>P23437</accession>
<accession>Q3KPN7</accession>
<evidence type="ECO:0000250" key="1"/>
<evidence type="ECO:0000250" key="2">
    <source>
        <dbReference type="UniProtKB" id="P24941"/>
    </source>
</evidence>
<evidence type="ECO:0000255" key="3">
    <source>
        <dbReference type="PROSITE-ProRule" id="PRU00159"/>
    </source>
</evidence>
<evidence type="ECO:0000255" key="4">
    <source>
        <dbReference type="PROSITE-ProRule" id="PRU10027"/>
    </source>
</evidence>
<evidence type="ECO:0000269" key="5">
    <source>
    </source>
</evidence>
<evidence type="ECO:0000269" key="6">
    <source>
    </source>
</evidence>
<evidence type="ECO:0000269" key="7">
    <source>
    </source>
</evidence>
<evidence type="ECO:0000305" key="8"/>
<organism>
    <name type="scientific">Xenopus laevis</name>
    <name type="common">African clawed frog</name>
    <dbReference type="NCBI Taxonomy" id="8355"/>
    <lineage>
        <taxon>Eukaryota</taxon>
        <taxon>Metazoa</taxon>
        <taxon>Chordata</taxon>
        <taxon>Craniata</taxon>
        <taxon>Vertebrata</taxon>
        <taxon>Euteleostomi</taxon>
        <taxon>Amphibia</taxon>
        <taxon>Batrachia</taxon>
        <taxon>Anura</taxon>
        <taxon>Pipoidea</taxon>
        <taxon>Pipidae</taxon>
        <taxon>Xenopodinae</taxon>
        <taxon>Xenopus</taxon>
        <taxon>Xenopus</taxon>
    </lineage>
</organism>
<comment type="function">
    <text evidence="2 5 6">Serine/threonine-protein kinase involved in the control of the cell cycle; essential for meiosis, but dispensable for mitosis (PubMed:10202150, PubMed:1704128). Triggers duplication of centrosomes and DNA (By similarity). Acts at the G1-S transition to promote the E2F transcriptional program and the initiation of DNA synthesis, and modulates G2 progression; controls the timing of entry into mitosis/meiosis by controlling the subsequent activation of cyclin B/CDK1 by phosphorylation, and coordinates the activation of cyclin B/CDK1 at the centrosome and in the nucleus (By similarity). Crucial role in orchestrating a fine balance between cellular proliferation, cell death, and DNA repair in embryonic stem cells (ESCs) (By similarity). Activity of CDK2 is maximal during S phase and G2; activated by interaction with cyclin E during the early stages of DNA synthesis to permit G1-S transition, and subsequently activated by cyclin A2 (cyclin A1 in germ cells) during the late stages of DNA replication to drive the transition from S phase to mitosis, the G2 phase (By similarity).</text>
</comment>
<comment type="catalytic activity">
    <reaction evidence="5">
        <text>L-seryl-[protein] + ATP = O-phospho-L-seryl-[protein] + ADP + H(+)</text>
        <dbReference type="Rhea" id="RHEA:17989"/>
        <dbReference type="Rhea" id="RHEA-COMP:9863"/>
        <dbReference type="Rhea" id="RHEA-COMP:11604"/>
        <dbReference type="ChEBI" id="CHEBI:15378"/>
        <dbReference type="ChEBI" id="CHEBI:29999"/>
        <dbReference type="ChEBI" id="CHEBI:30616"/>
        <dbReference type="ChEBI" id="CHEBI:83421"/>
        <dbReference type="ChEBI" id="CHEBI:456216"/>
        <dbReference type="EC" id="2.7.11.22"/>
    </reaction>
</comment>
<comment type="catalytic activity">
    <reaction evidence="5">
        <text>L-threonyl-[protein] + ATP = O-phospho-L-threonyl-[protein] + ADP + H(+)</text>
        <dbReference type="Rhea" id="RHEA:46608"/>
        <dbReference type="Rhea" id="RHEA-COMP:11060"/>
        <dbReference type="Rhea" id="RHEA-COMP:11605"/>
        <dbReference type="ChEBI" id="CHEBI:15378"/>
        <dbReference type="ChEBI" id="CHEBI:30013"/>
        <dbReference type="ChEBI" id="CHEBI:30616"/>
        <dbReference type="ChEBI" id="CHEBI:61977"/>
        <dbReference type="ChEBI" id="CHEBI:456216"/>
        <dbReference type="EC" id="2.7.11.22"/>
    </reaction>
</comment>
<comment type="activity regulation">
    <text evidence="1 5">Phosphorylation at Thr-14 or Tyr-15 inactivates the enzyme, while phosphorylation at Thr-160 activates it (By similarity). Activated by spdya.</text>
</comment>
<comment type="subunit">
    <text evidence="5">Interacts with spdya.</text>
</comment>
<comment type="developmental stage">
    <text evidence="6">Synthesized in unfertilized egg, but no longer made in the early embryo.</text>
</comment>
<comment type="similarity">
    <text evidence="8">Belongs to the protein kinase superfamily. CMGC Ser/Thr protein kinase family. CDC2/CDKX subfamily.</text>
</comment>
<protein>
    <recommendedName>
        <fullName>Cyclin-dependent kinase 2</fullName>
        <ecNumber evidence="5">2.7.11.22</ecNumber>
    </recommendedName>
    <alternativeName>
        <fullName>CDC2 homolog Eg1 protein kinase</fullName>
    </alternativeName>
    <alternativeName>
        <fullName>Cell division protein kinase 2</fullName>
    </alternativeName>
</protein>
<reference key="1">
    <citation type="journal article" date="1991" name="Proc. Natl. Acad. Sci. U.S.A.">
        <title>Cloning by differential screening of a Xenopus cDNA coding for a protein highly homologous to cdc2.</title>
        <authorList>
            <person name="Paris J."/>
            <person name="le Guellec R."/>
            <person name="Couturier A."/>
            <person name="le Guellec K."/>
            <person name="Omilli F."/>
            <person name="Camonis J."/>
            <person name="Macneill S."/>
            <person name="Philippe M."/>
        </authorList>
    </citation>
    <scope>NUCLEOTIDE SEQUENCE [MRNA]</scope>
    <scope>FUNCTION</scope>
    <scope>DEVELOPMENTAL STAGE</scope>
    <source>
        <tissue>Ovary</tissue>
    </source>
</reference>
<reference key="2">
    <citation type="submission" date="2005-10" db="EMBL/GenBank/DDBJ databases">
        <authorList>
            <consortium name="NIH - Xenopus Gene Collection (XGC) project"/>
        </authorList>
    </citation>
    <scope>NUCLEOTIDE SEQUENCE [LARGE SCALE MRNA]</scope>
    <source>
        <tissue>Oocyte</tissue>
    </source>
</reference>
<reference key="3">
    <citation type="journal article" date="1993" name="EMBO J.">
        <title>The cdc2-related protein p40MO15 is the catalytic subunit of a protein kinase that can activate p33cdk2 and p34cdc2.</title>
        <authorList>
            <person name="Poon R.Y.C."/>
            <person name="Yamashita K."/>
            <person name="Adamczewski J.P."/>
            <person name="Hunt T."/>
            <person name="Shuttleworth J."/>
        </authorList>
    </citation>
    <scope>PHOSPHORYLATION AT THR-160</scope>
</reference>
<reference key="4">
    <citation type="journal article" date="1999" name="EMBO J.">
        <title>Speedy: a novel cell cycle regulator of the G2/M transition.</title>
        <authorList>
            <person name="Lenormand J.-L."/>
            <person name="Dellinger R.W."/>
            <person name="Knudsen K.E."/>
            <person name="Subramani S."/>
            <person name="Donoghue D.J."/>
        </authorList>
    </citation>
    <scope>INTERACTION WITH SPDYA</scope>
    <scope>FUNCTION</scope>
    <scope>CATALYTIC ACTIVITY</scope>
    <scope>ACTIVITY REGULATION</scope>
    <source>
        <tissue>Ovary</tissue>
    </source>
</reference>
<dbReference type="EC" id="2.7.11.22" evidence="5"/>
<dbReference type="EMBL" id="X14227">
    <property type="protein sequence ID" value="CAA32443.1"/>
    <property type="molecule type" value="mRNA"/>
</dbReference>
<dbReference type="EMBL" id="BC106636">
    <property type="protein sequence ID" value="AAI06637.1"/>
    <property type="molecule type" value="mRNA"/>
</dbReference>
<dbReference type="PIR" id="A37871">
    <property type="entry name" value="A37871"/>
</dbReference>
<dbReference type="RefSeq" id="NP_001084120.1">
    <property type="nucleotide sequence ID" value="NM_001090651.1"/>
</dbReference>
<dbReference type="SMR" id="P23437"/>
<dbReference type="BioGRID" id="100639">
    <property type="interactions" value="6"/>
</dbReference>
<dbReference type="DIP" id="DIP-60879N"/>
<dbReference type="IntAct" id="P23437">
    <property type="interactions" value="1"/>
</dbReference>
<dbReference type="iPTMnet" id="P23437"/>
<dbReference type="DNASU" id="399314"/>
<dbReference type="GeneID" id="399314"/>
<dbReference type="KEGG" id="xla:399314"/>
<dbReference type="AGR" id="Xenbase:XB-GENE-1001995"/>
<dbReference type="CTD" id="399314"/>
<dbReference type="Xenbase" id="XB-GENE-1001995">
    <property type="gene designation" value="cdk2.S"/>
</dbReference>
<dbReference type="OMA" id="HCHENRI"/>
<dbReference type="OrthoDB" id="1732493at2759"/>
<dbReference type="BRENDA" id="2.7.11.22">
    <property type="organism ID" value="6725"/>
</dbReference>
<dbReference type="Proteomes" id="UP000186698">
    <property type="component" value="Chromosome 2S"/>
</dbReference>
<dbReference type="Bgee" id="399314">
    <property type="expression patterns" value="Expressed in egg cell and 18 other cell types or tissues"/>
</dbReference>
<dbReference type="GO" id="GO:0000307">
    <property type="term" value="C:cyclin-dependent protein kinase holoenzyme complex"/>
    <property type="evidence" value="ECO:0000318"/>
    <property type="project" value="GO_Central"/>
</dbReference>
<dbReference type="GO" id="GO:0005737">
    <property type="term" value="C:cytoplasm"/>
    <property type="evidence" value="ECO:0000318"/>
    <property type="project" value="GO_Central"/>
</dbReference>
<dbReference type="GO" id="GO:0005634">
    <property type="term" value="C:nucleus"/>
    <property type="evidence" value="ECO:0000318"/>
    <property type="project" value="GO_Central"/>
</dbReference>
<dbReference type="GO" id="GO:0005524">
    <property type="term" value="F:ATP binding"/>
    <property type="evidence" value="ECO:0007669"/>
    <property type="project" value="UniProtKB-KW"/>
</dbReference>
<dbReference type="GO" id="GO:0030332">
    <property type="term" value="F:cyclin binding"/>
    <property type="evidence" value="ECO:0000318"/>
    <property type="project" value="GO_Central"/>
</dbReference>
<dbReference type="GO" id="GO:0097472">
    <property type="term" value="F:cyclin-dependent protein kinase activity"/>
    <property type="evidence" value="ECO:0000250"/>
    <property type="project" value="UniProtKB"/>
</dbReference>
<dbReference type="GO" id="GO:0004693">
    <property type="term" value="F:cyclin-dependent protein serine/threonine kinase activity"/>
    <property type="evidence" value="ECO:0000250"/>
    <property type="project" value="UniProtKB"/>
</dbReference>
<dbReference type="GO" id="GO:0106310">
    <property type="term" value="F:protein serine kinase activity"/>
    <property type="evidence" value="ECO:0007669"/>
    <property type="project" value="RHEA"/>
</dbReference>
<dbReference type="GO" id="GO:0051301">
    <property type="term" value="P:cell division"/>
    <property type="evidence" value="ECO:0007669"/>
    <property type="project" value="UniProtKB-KW"/>
</dbReference>
<dbReference type="GO" id="GO:0000082">
    <property type="term" value="P:G1/S transition of mitotic cell cycle"/>
    <property type="evidence" value="ECO:0000318"/>
    <property type="project" value="GO_Central"/>
</dbReference>
<dbReference type="GO" id="GO:0006468">
    <property type="term" value="P:protein phosphorylation"/>
    <property type="evidence" value="ECO:0000250"/>
    <property type="project" value="UniProtKB"/>
</dbReference>
<dbReference type="GO" id="GO:0010389">
    <property type="term" value="P:regulation of G2/M transition of mitotic cell cycle"/>
    <property type="evidence" value="ECO:0000318"/>
    <property type="project" value="GO_Central"/>
</dbReference>
<dbReference type="GO" id="GO:0010468">
    <property type="term" value="P:regulation of gene expression"/>
    <property type="evidence" value="ECO:0000318"/>
    <property type="project" value="GO_Central"/>
</dbReference>
<dbReference type="GO" id="GO:0007165">
    <property type="term" value="P:signal transduction"/>
    <property type="evidence" value="ECO:0000318"/>
    <property type="project" value="GO_Central"/>
</dbReference>
<dbReference type="CDD" id="cd07860">
    <property type="entry name" value="STKc_CDK2_3"/>
    <property type="match status" value="1"/>
</dbReference>
<dbReference type="FunFam" id="1.10.510.10:FF:000144">
    <property type="entry name" value="Cyclin-dependent kinase 2"/>
    <property type="match status" value="1"/>
</dbReference>
<dbReference type="FunFam" id="3.30.200.20:FF:000599">
    <property type="entry name" value="Cyclin-dependent kinase 2"/>
    <property type="match status" value="1"/>
</dbReference>
<dbReference type="Gene3D" id="3.30.200.20">
    <property type="entry name" value="Phosphorylase Kinase, domain 1"/>
    <property type="match status" value="1"/>
</dbReference>
<dbReference type="Gene3D" id="1.10.510.10">
    <property type="entry name" value="Transferase(Phosphotransferase) domain 1"/>
    <property type="match status" value="1"/>
</dbReference>
<dbReference type="InterPro" id="IPR050108">
    <property type="entry name" value="CDK"/>
</dbReference>
<dbReference type="InterPro" id="IPR011009">
    <property type="entry name" value="Kinase-like_dom_sf"/>
</dbReference>
<dbReference type="InterPro" id="IPR000719">
    <property type="entry name" value="Prot_kinase_dom"/>
</dbReference>
<dbReference type="InterPro" id="IPR017441">
    <property type="entry name" value="Protein_kinase_ATP_BS"/>
</dbReference>
<dbReference type="InterPro" id="IPR008271">
    <property type="entry name" value="Ser/Thr_kinase_AS"/>
</dbReference>
<dbReference type="PANTHER" id="PTHR24056">
    <property type="entry name" value="CELL DIVISION PROTEIN KINASE"/>
    <property type="match status" value="1"/>
</dbReference>
<dbReference type="PANTHER" id="PTHR24056:SF254">
    <property type="entry name" value="CYCLIN-DEPENDENT KINASE 2"/>
    <property type="match status" value="1"/>
</dbReference>
<dbReference type="Pfam" id="PF00069">
    <property type="entry name" value="Pkinase"/>
    <property type="match status" value="1"/>
</dbReference>
<dbReference type="SMART" id="SM00220">
    <property type="entry name" value="S_TKc"/>
    <property type="match status" value="1"/>
</dbReference>
<dbReference type="SUPFAM" id="SSF56112">
    <property type="entry name" value="Protein kinase-like (PK-like)"/>
    <property type="match status" value="1"/>
</dbReference>
<dbReference type="PROSITE" id="PS00107">
    <property type="entry name" value="PROTEIN_KINASE_ATP"/>
    <property type="match status" value="1"/>
</dbReference>
<dbReference type="PROSITE" id="PS50011">
    <property type="entry name" value="PROTEIN_KINASE_DOM"/>
    <property type="match status" value="1"/>
</dbReference>
<dbReference type="PROSITE" id="PS00108">
    <property type="entry name" value="PROTEIN_KINASE_ST"/>
    <property type="match status" value="1"/>
</dbReference>
<proteinExistence type="evidence at protein level"/>
<name>CDK2_XENLA</name>
<keyword id="KW-0067">ATP-binding</keyword>
<keyword id="KW-0131">Cell cycle</keyword>
<keyword id="KW-0132">Cell division</keyword>
<keyword id="KW-0418">Kinase</keyword>
<keyword id="KW-0498">Mitosis</keyword>
<keyword id="KW-0547">Nucleotide-binding</keyword>
<keyword id="KW-0597">Phosphoprotein</keyword>
<keyword id="KW-1185">Reference proteome</keyword>
<keyword id="KW-0723">Serine/threonine-protein kinase</keyword>
<keyword id="KW-0808">Transferase</keyword>
<feature type="chain" id="PRO_0000085774" description="Cyclin-dependent kinase 2">
    <location>
        <begin position="1"/>
        <end position="297"/>
    </location>
</feature>
<feature type="domain" description="Protein kinase" evidence="3">
    <location>
        <begin position="4"/>
        <end position="286"/>
    </location>
</feature>
<feature type="active site" description="Proton acceptor" evidence="3 4">
    <location>
        <position position="127"/>
    </location>
</feature>
<feature type="binding site" evidence="3">
    <location>
        <begin position="10"/>
        <end position="18"/>
    </location>
    <ligand>
        <name>ATP</name>
        <dbReference type="ChEBI" id="CHEBI:30616"/>
    </ligand>
</feature>
<feature type="binding site" evidence="3">
    <location>
        <position position="33"/>
    </location>
    <ligand>
        <name>ATP</name>
        <dbReference type="ChEBI" id="CHEBI:30616"/>
    </ligand>
</feature>
<feature type="binding site" evidence="3">
    <location>
        <begin position="81"/>
        <end position="83"/>
    </location>
    <ligand>
        <name>ATP</name>
        <dbReference type="ChEBI" id="CHEBI:30616"/>
    </ligand>
</feature>
<feature type="binding site" evidence="3">
    <location>
        <position position="86"/>
    </location>
    <ligand>
        <name>ATP</name>
        <dbReference type="ChEBI" id="CHEBI:30616"/>
    </ligand>
</feature>
<feature type="binding site" evidence="3">
    <location>
        <begin position="129"/>
        <end position="132"/>
    </location>
    <ligand>
        <name>ATP</name>
        <dbReference type="ChEBI" id="CHEBI:30616"/>
    </ligand>
</feature>
<feature type="binding site" evidence="3">
    <location>
        <position position="145"/>
    </location>
    <ligand>
        <name>ATP</name>
        <dbReference type="ChEBI" id="CHEBI:30616"/>
    </ligand>
</feature>
<feature type="modified residue" description="Phosphothreonine" evidence="2">
    <location>
        <position position="14"/>
    </location>
</feature>
<feature type="modified residue" description="Phosphotyrosine" evidence="2">
    <location>
        <position position="15"/>
    </location>
</feature>
<feature type="modified residue" description="Phosphothreonine; by CAK" evidence="7">
    <location>
        <position position="160"/>
    </location>
</feature>
<feature type="sequence conflict" description="In Ref. 1; CAA32443." evidence="8" ref="1">
    <original>G</original>
    <variation>R</variation>
    <location>
        <position position="93"/>
    </location>
</feature>
<gene>
    <name type="primary">cdk2</name>
    <name type="synonym">eg1</name>
</gene>